<dbReference type="EMBL" id="M60329">
    <property type="protein sequence ID" value="AAA30402.1"/>
    <property type="molecule type" value="mRNA"/>
</dbReference>
<dbReference type="PIR" id="JH0602">
    <property type="entry name" value="JH0602"/>
</dbReference>
<dbReference type="RefSeq" id="NP_776949.1">
    <property type="nucleotide sequence ID" value="NM_174524.2"/>
</dbReference>
<dbReference type="SMR" id="P26444"/>
<dbReference type="FunCoup" id="P26444">
    <property type="interactions" value="43"/>
</dbReference>
<dbReference type="STRING" id="9913.ENSBTAP00000019735"/>
<dbReference type="PaxDb" id="9913-ENSBTAP00000019735"/>
<dbReference type="Ensembl" id="ENSBTAT00000019735.3">
    <property type="protein sequence ID" value="ENSBTAP00000019735.2"/>
    <property type="gene ID" value="ENSBTAG00000014819.6"/>
</dbReference>
<dbReference type="GeneID" id="282203"/>
<dbReference type="KEGG" id="bta:282203"/>
<dbReference type="CTD" id="1412"/>
<dbReference type="VEuPathDB" id="HostDB:ENSBTAG00000014819"/>
<dbReference type="VGNC" id="VGNC:27734">
    <property type="gene designation" value="CRYBA2"/>
</dbReference>
<dbReference type="eggNOG" id="ENOG502QVIR">
    <property type="taxonomic scope" value="Eukaryota"/>
</dbReference>
<dbReference type="GeneTree" id="ENSGT00940000160306"/>
<dbReference type="HOGENOM" id="CLU_081883_0_0_1"/>
<dbReference type="InParanoid" id="P26444"/>
<dbReference type="OMA" id="SDCANIA"/>
<dbReference type="OrthoDB" id="10067219at2759"/>
<dbReference type="TreeFam" id="TF331401"/>
<dbReference type="Proteomes" id="UP000009136">
    <property type="component" value="Chromosome 2"/>
</dbReference>
<dbReference type="Bgee" id="ENSBTAG00000014819">
    <property type="expression patterns" value="Expressed in pigment epithelium of eye and 11 other cell types or tissues"/>
</dbReference>
<dbReference type="GO" id="GO:0005212">
    <property type="term" value="F:structural constituent of eye lens"/>
    <property type="evidence" value="ECO:0000318"/>
    <property type="project" value="GO_Central"/>
</dbReference>
<dbReference type="GO" id="GO:0002088">
    <property type="term" value="P:lens development in camera-type eye"/>
    <property type="evidence" value="ECO:0000318"/>
    <property type="project" value="GO_Central"/>
</dbReference>
<dbReference type="GO" id="GO:0007601">
    <property type="term" value="P:visual perception"/>
    <property type="evidence" value="ECO:0000318"/>
    <property type="project" value="GO_Central"/>
</dbReference>
<dbReference type="FunFam" id="2.60.20.10:FF:000012">
    <property type="entry name" value="Beta-crystallin A2"/>
    <property type="match status" value="1"/>
</dbReference>
<dbReference type="FunFam" id="2.60.20.10:FF:000004">
    <property type="entry name" value="Crystallin beta A4"/>
    <property type="match status" value="1"/>
</dbReference>
<dbReference type="Gene3D" id="2.60.20.10">
    <property type="entry name" value="Crystallins"/>
    <property type="match status" value="2"/>
</dbReference>
<dbReference type="InterPro" id="IPR050252">
    <property type="entry name" value="Beta/Gamma-Crystallin"/>
</dbReference>
<dbReference type="InterPro" id="IPR001064">
    <property type="entry name" value="Beta/gamma_crystallin"/>
</dbReference>
<dbReference type="InterPro" id="IPR011024">
    <property type="entry name" value="G_crystallin-like"/>
</dbReference>
<dbReference type="PANTHER" id="PTHR11818:SF7">
    <property type="entry name" value="BETA-CRYSTALLIN A2"/>
    <property type="match status" value="1"/>
</dbReference>
<dbReference type="PANTHER" id="PTHR11818">
    <property type="entry name" value="BETA/GAMMA CRYSTALLIN"/>
    <property type="match status" value="1"/>
</dbReference>
<dbReference type="Pfam" id="PF00030">
    <property type="entry name" value="Crystall"/>
    <property type="match status" value="2"/>
</dbReference>
<dbReference type="PRINTS" id="PR01367">
    <property type="entry name" value="BGCRYSTALLIN"/>
</dbReference>
<dbReference type="SMART" id="SM00247">
    <property type="entry name" value="XTALbg"/>
    <property type="match status" value="2"/>
</dbReference>
<dbReference type="SUPFAM" id="SSF49695">
    <property type="entry name" value="gamma-Crystallin-like"/>
    <property type="match status" value="1"/>
</dbReference>
<dbReference type="PROSITE" id="PS50915">
    <property type="entry name" value="CRYSTALLIN_BETA_GAMMA"/>
    <property type="match status" value="4"/>
</dbReference>
<evidence type="ECO:0000250" key="1"/>
<evidence type="ECO:0000255" key="2">
    <source>
        <dbReference type="PROSITE-ProRule" id="PRU00028"/>
    </source>
</evidence>
<evidence type="ECO:0000305" key="3"/>
<accession>P26444</accession>
<sequence length="197" mass="22231">MSSAPAQGPAPASLTLWDEEDFQGRRCRLLSDCANIGERGGLRRVRSVKVENGAWVAFEYPDFQGQQFILEKGDYPRWSAWSGSAGHHSDQLLSFRPVLCANHSDSRVTLFEGENFQGCKFELNDDYPSLPSMGWASKDVGSLKVSSGAWVAYQYPGYRGYQYVLERDHHSGEFRNYSEFGTQAHTGQLQSIRRVQH</sequence>
<name>CRBA2_BOVIN</name>
<reference key="1">
    <citation type="journal article" date="1991" name="Gene">
        <title>Isolation and characterization of cDNAs encoding beta A2- and beta A4-crystallins: heterologous interactions in the predicted beta A4-beta B2 heterodimer.</title>
        <authorList>
            <person name="van Rens G.L."/>
            <person name="Driessen H.P.C."/>
            <person name="Nalini V."/>
            <person name="Slingsby C."/>
            <person name="de Jong W.W."/>
            <person name="Bloemendal H."/>
        </authorList>
    </citation>
    <scope>NUCLEOTIDE SEQUENCE [MRNA]</scope>
    <source>
        <tissue>Lens</tissue>
    </source>
</reference>
<reference key="2">
    <citation type="journal article" date="1984" name="Eur. J. Biochem.">
        <title>Homology between the primary structures of the major bovine beta-crystallin chains.</title>
        <authorList>
            <person name="Berbers G.A.M."/>
            <person name="Hoekman W.A."/>
            <person name="Bloemendal H."/>
            <person name="de Jong W.W."/>
            <person name="Kleinschmidt T."/>
            <person name="Braunitzer G."/>
        </authorList>
    </citation>
    <scope>PROTEIN SEQUENCE OF 134-197</scope>
    <source>
        <tissue>Lens cortex</tissue>
    </source>
</reference>
<feature type="chain" id="PRO_0000057538" description="Beta-crystallin A2">
    <location>
        <begin position="1"/>
        <end position="197"/>
    </location>
</feature>
<feature type="domain" description="Beta/gamma crystallin 'Greek key' 1" evidence="2">
    <location>
        <begin position="12"/>
        <end position="52"/>
    </location>
</feature>
<feature type="domain" description="Beta/gamma crystallin 'Greek key' 2" evidence="2">
    <location>
        <begin position="53"/>
        <end position="99"/>
    </location>
</feature>
<feature type="domain" description="Beta/gamma crystallin 'Greek key' 3" evidence="2">
    <location>
        <begin position="106"/>
        <end position="147"/>
    </location>
</feature>
<feature type="domain" description="Beta/gamma crystallin 'Greek key' 4" evidence="2">
    <location>
        <begin position="148"/>
        <end position="196"/>
    </location>
</feature>
<feature type="region of interest" description="N-terminal arm">
    <location>
        <begin position="1"/>
        <end position="11"/>
    </location>
</feature>
<feature type="region of interest" description="Connecting peptide">
    <location>
        <begin position="100"/>
        <end position="105"/>
    </location>
</feature>
<feature type="sequence conflict" description="In Ref. 2; AA sequence." evidence="3" ref="2">
    <original>QAH</original>
    <variation>HAQ</variation>
    <location>
        <begin position="183"/>
        <end position="185"/>
    </location>
</feature>
<proteinExistence type="evidence at protein level"/>
<protein>
    <recommendedName>
        <fullName>Beta-crystallin A2</fullName>
    </recommendedName>
    <alternativeName>
        <fullName>Beta-A2 crystallin</fullName>
    </alternativeName>
</protein>
<comment type="function">
    <text>Crystallins are the dominant structural components of the vertebrate eye lens.</text>
</comment>
<comment type="subunit">
    <text evidence="1">Homo/heterodimer, or complexes of higher-order. The structure of beta-crystallin oligomers seems to be stabilized through interactions between the N-terminal arms (By similarity).</text>
</comment>
<comment type="domain">
    <text>Has a two-domain beta-structure, folded into four very similar Greek key motifs.</text>
</comment>
<comment type="similarity">
    <text evidence="3">Belongs to the beta/gamma-crystallin family.</text>
</comment>
<keyword id="KW-0903">Direct protein sequencing</keyword>
<keyword id="KW-0273">Eye lens protein</keyword>
<keyword id="KW-1185">Reference proteome</keyword>
<keyword id="KW-0677">Repeat</keyword>
<gene>
    <name type="primary">CRYBA2</name>
</gene>
<organism>
    <name type="scientific">Bos taurus</name>
    <name type="common">Bovine</name>
    <dbReference type="NCBI Taxonomy" id="9913"/>
    <lineage>
        <taxon>Eukaryota</taxon>
        <taxon>Metazoa</taxon>
        <taxon>Chordata</taxon>
        <taxon>Craniata</taxon>
        <taxon>Vertebrata</taxon>
        <taxon>Euteleostomi</taxon>
        <taxon>Mammalia</taxon>
        <taxon>Eutheria</taxon>
        <taxon>Laurasiatheria</taxon>
        <taxon>Artiodactyla</taxon>
        <taxon>Ruminantia</taxon>
        <taxon>Pecora</taxon>
        <taxon>Bovidae</taxon>
        <taxon>Bovinae</taxon>
        <taxon>Bos</taxon>
    </lineage>
</organism>